<sequence length="495" mass="53963">MSKYLLAIDQGTTSSRAIIFSAQGLPVARAQQEFKQYFPQDGWVEHDGQEIWLSTLKVCREAIASSGLQAEAIAAIGITNQRETTLVWDAASGTPIHLAIVWQDRRTADYCAGLKDAGHEAMVSAKTGLLIDPYFSATKLRWILENVPGARERAQRGELRFGTVDSFLLWRLTGGKVHRTDASNASRTLMFNIHTQQWDQDLLELFDIPASLLPEVLDCAAEFGHAEAELLGASIPVLGMAGDQQAALIGQACFEPGMVKSTYGTGCFMIQNTGDQPVSSKNRLLTTVGYRLGGKVTYAVEGSIFVAGAAVQWLRDGIKLISHARDSEALAEATGEACGVYLVPAFTGLGAPYWDPKARGAIFGLTRDTGIKEIVTAGLQSVCYQTRDLLEAMRQDGAAAPSALRVDGGMVENNWVMQFLADILGVSVERPEVTETTALGVAYLAGLQLGLYPDLQAIASHWHRQQRFEPRMSETHRERLYAGWLDAVKRVRSEG</sequence>
<comment type="function">
    <text evidence="1">Key enzyme in the regulation of glycerol uptake and metabolism. Catalyzes the phosphorylation of glycerol to yield sn-glycerol 3-phosphate.</text>
</comment>
<comment type="catalytic activity">
    <reaction evidence="1">
        <text>glycerol + ATP = sn-glycerol 3-phosphate + ADP + H(+)</text>
        <dbReference type="Rhea" id="RHEA:21644"/>
        <dbReference type="ChEBI" id="CHEBI:15378"/>
        <dbReference type="ChEBI" id="CHEBI:17754"/>
        <dbReference type="ChEBI" id="CHEBI:30616"/>
        <dbReference type="ChEBI" id="CHEBI:57597"/>
        <dbReference type="ChEBI" id="CHEBI:456216"/>
        <dbReference type="EC" id="2.7.1.30"/>
    </reaction>
</comment>
<comment type="activity regulation">
    <text evidence="1">Inhibited by fructose 1,6-bisphosphate (FBP).</text>
</comment>
<comment type="pathway">
    <text evidence="1">Polyol metabolism; glycerol degradation via glycerol kinase pathway; sn-glycerol 3-phosphate from glycerol: step 1/1.</text>
</comment>
<comment type="similarity">
    <text evidence="1">Belongs to the FGGY kinase family.</text>
</comment>
<dbReference type="EC" id="2.7.1.30" evidence="1"/>
<dbReference type="EMBL" id="CP000680">
    <property type="protein sequence ID" value="ABP86097.1"/>
    <property type="molecule type" value="Genomic_DNA"/>
</dbReference>
<dbReference type="SMR" id="A4XXN1"/>
<dbReference type="STRING" id="399739.Pmen_3345"/>
<dbReference type="KEGG" id="pmy:Pmen_3345"/>
<dbReference type="PATRIC" id="fig|399739.8.peg.3395"/>
<dbReference type="eggNOG" id="COG0554">
    <property type="taxonomic scope" value="Bacteria"/>
</dbReference>
<dbReference type="HOGENOM" id="CLU_009281_2_3_6"/>
<dbReference type="OrthoDB" id="9805576at2"/>
<dbReference type="UniPathway" id="UPA00618">
    <property type="reaction ID" value="UER00672"/>
</dbReference>
<dbReference type="GO" id="GO:0005829">
    <property type="term" value="C:cytosol"/>
    <property type="evidence" value="ECO:0007669"/>
    <property type="project" value="TreeGrafter"/>
</dbReference>
<dbReference type="GO" id="GO:0005524">
    <property type="term" value="F:ATP binding"/>
    <property type="evidence" value="ECO:0007669"/>
    <property type="project" value="UniProtKB-UniRule"/>
</dbReference>
<dbReference type="GO" id="GO:0004370">
    <property type="term" value="F:glycerol kinase activity"/>
    <property type="evidence" value="ECO:0000250"/>
    <property type="project" value="UniProtKB"/>
</dbReference>
<dbReference type="GO" id="GO:0019563">
    <property type="term" value="P:glycerol catabolic process"/>
    <property type="evidence" value="ECO:0007669"/>
    <property type="project" value="UniProtKB-UniRule"/>
</dbReference>
<dbReference type="GO" id="GO:0006071">
    <property type="term" value="P:glycerol metabolic process"/>
    <property type="evidence" value="ECO:0000250"/>
    <property type="project" value="UniProtKB"/>
</dbReference>
<dbReference type="GO" id="GO:0006072">
    <property type="term" value="P:glycerol-3-phosphate metabolic process"/>
    <property type="evidence" value="ECO:0007669"/>
    <property type="project" value="InterPro"/>
</dbReference>
<dbReference type="CDD" id="cd07786">
    <property type="entry name" value="FGGY_EcGK_like"/>
    <property type="match status" value="1"/>
</dbReference>
<dbReference type="FunFam" id="3.30.420.40:FF:000007">
    <property type="entry name" value="Glycerol kinase"/>
    <property type="match status" value="1"/>
</dbReference>
<dbReference type="FunFam" id="3.30.420.40:FF:000008">
    <property type="entry name" value="Glycerol kinase"/>
    <property type="match status" value="1"/>
</dbReference>
<dbReference type="Gene3D" id="3.30.420.40">
    <property type="match status" value="2"/>
</dbReference>
<dbReference type="HAMAP" id="MF_00186">
    <property type="entry name" value="Glycerol_kin"/>
    <property type="match status" value="1"/>
</dbReference>
<dbReference type="InterPro" id="IPR043129">
    <property type="entry name" value="ATPase_NBD"/>
</dbReference>
<dbReference type="InterPro" id="IPR000577">
    <property type="entry name" value="Carb_kinase_FGGY"/>
</dbReference>
<dbReference type="InterPro" id="IPR018483">
    <property type="entry name" value="Carb_kinase_FGGY_CS"/>
</dbReference>
<dbReference type="InterPro" id="IPR018485">
    <property type="entry name" value="FGGY_C"/>
</dbReference>
<dbReference type="InterPro" id="IPR018484">
    <property type="entry name" value="FGGY_N"/>
</dbReference>
<dbReference type="InterPro" id="IPR005999">
    <property type="entry name" value="Glycerol_kin"/>
</dbReference>
<dbReference type="NCBIfam" id="TIGR01311">
    <property type="entry name" value="glycerol_kin"/>
    <property type="match status" value="1"/>
</dbReference>
<dbReference type="NCBIfam" id="NF000756">
    <property type="entry name" value="PRK00047.1"/>
    <property type="match status" value="1"/>
</dbReference>
<dbReference type="PANTHER" id="PTHR10196:SF78">
    <property type="entry name" value="GLYCEROL KINASE"/>
    <property type="match status" value="1"/>
</dbReference>
<dbReference type="PANTHER" id="PTHR10196">
    <property type="entry name" value="SUGAR KINASE"/>
    <property type="match status" value="1"/>
</dbReference>
<dbReference type="Pfam" id="PF02782">
    <property type="entry name" value="FGGY_C"/>
    <property type="match status" value="1"/>
</dbReference>
<dbReference type="Pfam" id="PF00370">
    <property type="entry name" value="FGGY_N"/>
    <property type="match status" value="1"/>
</dbReference>
<dbReference type="PIRSF" id="PIRSF000538">
    <property type="entry name" value="GlpK"/>
    <property type="match status" value="1"/>
</dbReference>
<dbReference type="SUPFAM" id="SSF53067">
    <property type="entry name" value="Actin-like ATPase domain"/>
    <property type="match status" value="2"/>
</dbReference>
<dbReference type="PROSITE" id="PS00933">
    <property type="entry name" value="FGGY_KINASES_1"/>
    <property type="match status" value="1"/>
</dbReference>
<reference key="1">
    <citation type="submission" date="2007-04" db="EMBL/GenBank/DDBJ databases">
        <title>Complete sequence of Pseudomonas mendocina ymp.</title>
        <authorList>
            <consortium name="US DOE Joint Genome Institute"/>
            <person name="Copeland A."/>
            <person name="Lucas S."/>
            <person name="Lapidus A."/>
            <person name="Barry K."/>
            <person name="Glavina del Rio T."/>
            <person name="Dalin E."/>
            <person name="Tice H."/>
            <person name="Pitluck S."/>
            <person name="Kiss H."/>
            <person name="Brettin T."/>
            <person name="Detter J.C."/>
            <person name="Bruce D."/>
            <person name="Han C."/>
            <person name="Schmutz J."/>
            <person name="Larimer F."/>
            <person name="Land M."/>
            <person name="Hauser L."/>
            <person name="Kyrpides N."/>
            <person name="Mikhailova N."/>
            <person name="Hersman L."/>
            <person name="Dubois J."/>
            <person name="Maurice P."/>
            <person name="Richardson P."/>
        </authorList>
    </citation>
    <scope>NUCLEOTIDE SEQUENCE [LARGE SCALE GENOMIC DNA]</scope>
    <source>
        <strain>ymp</strain>
    </source>
</reference>
<feature type="chain" id="PRO_1000020760" description="Glycerol kinase">
    <location>
        <begin position="1"/>
        <end position="495"/>
    </location>
</feature>
<feature type="binding site" evidence="1">
    <location>
        <position position="12"/>
    </location>
    <ligand>
        <name>ADP</name>
        <dbReference type="ChEBI" id="CHEBI:456216"/>
    </ligand>
</feature>
<feature type="binding site" evidence="1">
    <location>
        <position position="12"/>
    </location>
    <ligand>
        <name>ATP</name>
        <dbReference type="ChEBI" id="CHEBI:30616"/>
    </ligand>
</feature>
<feature type="binding site" evidence="1">
    <location>
        <position position="12"/>
    </location>
    <ligand>
        <name>sn-glycerol 3-phosphate</name>
        <dbReference type="ChEBI" id="CHEBI:57597"/>
    </ligand>
</feature>
<feature type="binding site" evidence="1">
    <location>
        <position position="13"/>
    </location>
    <ligand>
        <name>ATP</name>
        <dbReference type="ChEBI" id="CHEBI:30616"/>
    </ligand>
</feature>
<feature type="binding site" evidence="1">
    <location>
        <position position="14"/>
    </location>
    <ligand>
        <name>ATP</name>
        <dbReference type="ChEBI" id="CHEBI:30616"/>
    </ligand>
</feature>
<feature type="binding site" evidence="1">
    <location>
        <position position="16"/>
    </location>
    <ligand>
        <name>ADP</name>
        <dbReference type="ChEBI" id="CHEBI:456216"/>
    </ligand>
</feature>
<feature type="binding site" evidence="1">
    <location>
        <position position="82"/>
    </location>
    <ligand>
        <name>glycerol</name>
        <dbReference type="ChEBI" id="CHEBI:17754"/>
    </ligand>
</feature>
<feature type="binding site" evidence="1">
    <location>
        <position position="82"/>
    </location>
    <ligand>
        <name>sn-glycerol 3-phosphate</name>
        <dbReference type="ChEBI" id="CHEBI:57597"/>
    </ligand>
</feature>
<feature type="binding site" evidence="1">
    <location>
        <position position="83"/>
    </location>
    <ligand>
        <name>glycerol</name>
        <dbReference type="ChEBI" id="CHEBI:17754"/>
    </ligand>
</feature>
<feature type="binding site" evidence="1">
    <location>
        <position position="83"/>
    </location>
    <ligand>
        <name>sn-glycerol 3-phosphate</name>
        <dbReference type="ChEBI" id="CHEBI:57597"/>
    </ligand>
</feature>
<feature type="binding site" evidence="1">
    <location>
        <position position="134"/>
    </location>
    <ligand>
        <name>glycerol</name>
        <dbReference type="ChEBI" id="CHEBI:17754"/>
    </ligand>
</feature>
<feature type="binding site" evidence="1">
    <location>
        <position position="134"/>
    </location>
    <ligand>
        <name>sn-glycerol 3-phosphate</name>
        <dbReference type="ChEBI" id="CHEBI:57597"/>
    </ligand>
</feature>
<feature type="binding site" evidence="1">
    <location>
        <position position="243"/>
    </location>
    <ligand>
        <name>glycerol</name>
        <dbReference type="ChEBI" id="CHEBI:17754"/>
    </ligand>
</feature>
<feature type="binding site" evidence="1">
    <location>
        <position position="243"/>
    </location>
    <ligand>
        <name>sn-glycerol 3-phosphate</name>
        <dbReference type="ChEBI" id="CHEBI:57597"/>
    </ligand>
</feature>
<feature type="binding site" evidence="1">
    <location>
        <position position="244"/>
    </location>
    <ligand>
        <name>glycerol</name>
        <dbReference type="ChEBI" id="CHEBI:17754"/>
    </ligand>
</feature>
<feature type="binding site" evidence="1">
    <location>
        <position position="265"/>
    </location>
    <ligand>
        <name>ADP</name>
        <dbReference type="ChEBI" id="CHEBI:456216"/>
    </ligand>
</feature>
<feature type="binding site" evidence="1">
    <location>
        <position position="265"/>
    </location>
    <ligand>
        <name>ATP</name>
        <dbReference type="ChEBI" id="CHEBI:30616"/>
    </ligand>
</feature>
<feature type="binding site" evidence="1">
    <location>
        <position position="308"/>
    </location>
    <ligand>
        <name>ADP</name>
        <dbReference type="ChEBI" id="CHEBI:456216"/>
    </ligand>
</feature>
<feature type="binding site" evidence="1">
    <location>
        <position position="308"/>
    </location>
    <ligand>
        <name>ATP</name>
        <dbReference type="ChEBI" id="CHEBI:30616"/>
    </ligand>
</feature>
<feature type="binding site" evidence="1">
    <location>
        <position position="312"/>
    </location>
    <ligand>
        <name>ATP</name>
        <dbReference type="ChEBI" id="CHEBI:30616"/>
    </ligand>
</feature>
<feature type="binding site" evidence="1">
    <location>
        <position position="409"/>
    </location>
    <ligand>
        <name>ADP</name>
        <dbReference type="ChEBI" id="CHEBI:456216"/>
    </ligand>
</feature>
<feature type="binding site" evidence="1">
    <location>
        <position position="409"/>
    </location>
    <ligand>
        <name>ATP</name>
        <dbReference type="ChEBI" id="CHEBI:30616"/>
    </ligand>
</feature>
<feature type="binding site" evidence="1">
    <location>
        <position position="413"/>
    </location>
    <ligand>
        <name>ADP</name>
        <dbReference type="ChEBI" id="CHEBI:456216"/>
    </ligand>
</feature>
<keyword id="KW-0067">ATP-binding</keyword>
<keyword id="KW-0319">Glycerol metabolism</keyword>
<keyword id="KW-0418">Kinase</keyword>
<keyword id="KW-0547">Nucleotide-binding</keyword>
<keyword id="KW-0808">Transferase</keyword>
<gene>
    <name evidence="1" type="primary">glpK</name>
    <name type="ordered locus">Pmen_3345</name>
</gene>
<protein>
    <recommendedName>
        <fullName evidence="1">Glycerol kinase</fullName>
        <ecNumber evidence="1">2.7.1.30</ecNumber>
    </recommendedName>
    <alternativeName>
        <fullName evidence="1">ATP:glycerol 3-phosphotransferase</fullName>
    </alternativeName>
    <alternativeName>
        <fullName evidence="1">Glycerokinase</fullName>
        <shortName evidence="1">GK</shortName>
    </alternativeName>
</protein>
<organism>
    <name type="scientific">Ectopseudomonas mendocina (strain ymp)</name>
    <name type="common">Pseudomonas mendocina</name>
    <dbReference type="NCBI Taxonomy" id="399739"/>
    <lineage>
        <taxon>Bacteria</taxon>
        <taxon>Pseudomonadati</taxon>
        <taxon>Pseudomonadota</taxon>
        <taxon>Gammaproteobacteria</taxon>
        <taxon>Pseudomonadales</taxon>
        <taxon>Pseudomonadaceae</taxon>
        <taxon>Ectopseudomonas</taxon>
    </lineage>
</organism>
<name>GLPK_ECTM1</name>
<evidence type="ECO:0000255" key="1">
    <source>
        <dbReference type="HAMAP-Rule" id="MF_00186"/>
    </source>
</evidence>
<accession>A4XXN1</accession>
<proteinExistence type="inferred from homology"/>